<dbReference type="EC" id="6.1.1.22" evidence="1"/>
<dbReference type="EMBL" id="AE017243">
    <property type="protein sequence ID" value="AAZ44500.1"/>
    <property type="molecule type" value="Genomic_DNA"/>
</dbReference>
<dbReference type="RefSeq" id="WP_011284172.1">
    <property type="nucleotide sequence ID" value="NC_007295.1"/>
</dbReference>
<dbReference type="SMR" id="Q4A9S1"/>
<dbReference type="GeneID" id="41334715"/>
<dbReference type="KEGG" id="mhj:MHJ_0414"/>
<dbReference type="eggNOG" id="COG0017">
    <property type="taxonomic scope" value="Bacteria"/>
</dbReference>
<dbReference type="HOGENOM" id="CLU_004553_2_0_14"/>
<dbReference type="OrthoDB" id="9762036at2"/>
<dbReference type="Proteomes" id="UP000000548">
    <property type="component" value="Chromosome"/>
</dbReference>
<dbReference type="GO" id="GO:0005737">
    <property type="term" value="C:cytoplasm"/>
    <property type="evidence" value="ECO:0007669"/>
    <property type="project" value="UniProtKB-SubCell"/>
</dbReference>
<dbReference type="GO" id="GO:0004816">
    <property type="term" value="F:asparagine-tRNA ligase activity"/>
    <property type="evidence" value="ECO:0007669"/>
    <property type="project" value="UniProtKB-UniRule"/>
</dbReference>
<dbReference type="GO" id="GO:0005524">
    <property type="term" value="F:ATP binding"/>
    <property type="evidence" value="ECO:0007669"/>
    <property type="project" value="UniProtKB-UniRule"/>
</dbReference>
<dbReference type="GO" id="GO:0003676">
    <property type="term" value="F:nucleic acid binding"/>
    <property type="evidence" value="ECO:0007669"/>
    <property type="project" value="InterPro"/>
</dbReference>
<dbReference type="GO" id="GO:0006421">
    <property type="term" value="P:asparaginyl-tRNA aminoacylation"/>
    <property type="evidence" value="ECO:0007669"/>
    <property type="project" value="UniProtKB-UniRule"/>
</dbReference>
<dbReference type="CDD" id="cd04318">
    <property type="entry name" value="EcAsnRS_like_N"/>
    <property type="match status" value="1"/>
</dbReference>
<dbReference type="FunFam" id="3.30.930.10:FF:000016">
    <property type="entry name" value="Asparagine--tRNA ligase"/>
    <property type="match status" value="1"/>
</dbReference>
<dbReference type="Gene3D" id="3.30.930.10">
    <property type="entry name" value="Bira Bifunctional Protein, Domain 2"/>
    <property type="match status" value="1"/>
</dbReference>
<dbReference type="Gene3D" id="2.40.50.140">
    <property type="entry name" value="Nucleic acid-binding proteins"/>
    <property type="match status" value="1"/>
</dbReference>
<dbReference type="HAMAP" id="MF_00534">
    <property type="entry name" value="Asn_tRNA_synth"/>
    <property type="match status" value="1"/>
</dbReference>
<dbReference type="InterPro" id="IPR004364">
    <property type="entry name" value="Aa-tRNA-synt_II"/>
</dbReference>
<dbReference type="InterPro" id="IPR006195">
    <property type="entry name" value="aa-tRNA-synth_II"/>
</dbReference>
<dbReference type="InterPro" id="IPR045864">
    <property type="entry name" value="aa-tRNA-synth_II/BPL/LPL"/>
</dbReference>
<dbReference type="InterPro" id="IPR004522">
    <property type="entry name" value="Asn-tRNA-ligase"/>
</dbReference>
<dbReference type="InterPro" id="IPR002312">
    <property type="entry name" value="Asp/Asn-tRNA-synth_IIb"/>
</dbReference>
<dbReference type="InterPro" id="IPR012340">
    <property type="entry name" value="NA-bd_OB-fold"/>
</dbReference>
<dbReference type="InterPro" id="IPR004365">
    <property type="entry name" value="NA-bd_OB_tRNA"/>
</dbReference>
<dbReference type="NCBIfam" id="TIGR00457">
    <property type="entry name" value="asnS"/>
    <property type="match status" value="1"/>
</dbReference>
<dbReference type="NCBIfam" id="NF003037">
    <property type="entry name" value="PRK03932.1"/>
    <property type="match status" value="1"/>
</dbReference>
<dbReference type="PANTHER" id="PTHR22594:SF34">
    <property type="entry name" value="ASPARAGINE--TRNA LIGASE, MITOCHONDRIAL-RELATED"/>
    <property type="match status" value="1"/>
</dbReference>
<dbReference type="PANTHER" id="PTHR22594">
    <property type="entry name" value="ASPARTYL/LYSYL-TRNA SYNTHETASE"/>
    <property type="match status" value="1"/>
</dbReference>
<dbReference type="Pfam" id="PF00152">
    <property type="entry name" value="tRNA-synt_2"/>
    <property type="match status" value="1"/>
</dbReference>
<dbReference type="Pfam" id="PF01336">
    <property type="entry name" value="tRNA_anti-codon"/>
    <property type="match status" value="1"/>
</dbReference>
<dbReference type="PRINTS" id="PR01042">
    <property type="entry name" value="TRNASYNTHASP"/>
</dbReference>
<dbReference type="SUPFAM" id="SSF55681">
    <property type="entry name" value="Class II aaRS and biotin synthetases"/>
    <property type="match status" value="1"/>
</dbReference>
<dbReference type="SUPFAM" id="SSF50249">
    <property type="entry name" value="Nucleic acid-binding proteins"/>
    <property type="match status" value="1"/>
</dbReference>
<dbReference type="PROSITE" id="PS50862">
    <property type="entry name" value="AA_TRNA_LIGASE_II"/>
    <property type="match status" value="1"/>
</dbReference>
<reference key="1">
    <citation type="journal article" date="2005" name="J. Bacteriol.">
        <title>Swine and poultry pathogens: the complete genome sequences of two strains of Mycoplasma hyopneumoniae and a strain of Mycoplasma synoviae.</title>
        <authorList>
            <person name="Vasconcelos A.T.R."/>
            <person name="Ferreira H.B."/>
            <person name="Bizarro C.V."/>
            <person name="Bonatto S.L."/>
            <person name="Carvalho M.O."/>
            <person name="Pinto P.M."/>
            <person name="Almeida D.F."/>
            <person name="Almeida L.G.P."/>
            <person name="Almeida R."/>
            <person name="Alves-Junior L."/>
            <person name="Assuncao E.N."/>
            <person name="Azevedo V.A.C."/>
            <person name="Bogo M.R."/>
            <person name="Brigido M.M."/>
            <person name="Brocchi M."/>
            <person name="Burity H.A."/>
            <person name="Camargo A.A."/>
            <person name="Camargo S.S."/>
            <person name="Carepo M.S."/>
            <person name="Carraro D.M."/>
            <person name="de Mattos Cascardo J.C."/>
            <person name="Castro L.A."/>
            <person name="Cavalcanti G."/>
            <person name="Chemale G."/>
            <person name="Collevatti R.G."/>
            <person name="Cunha C.W."/>
            <person name="Dallagiovanna B."/>
            <person name="Dambros B.P."/>
            <person name="Dellagostin O.A."/>
            <person name="Falcao C."/>
            <person name="Fantinatti-Garboggini F."/>
            <person name="Felipe M.S.S."/>
            <person name="Fiorentin L."/>
            <person name="Franco G.R."/>
            <person name="Freitas N.S.A."/>
            <person name="Frias D."/>
            <person name="Grangeiro T.B."/>
            <person name="Grisard E.C."/>
            <person name="Guimaraes C.T."/>
            <person name="Hungria M."/>
            <person name="Jardim S.N."/>
            <person name="Krieger M.A."/>
            <person name="Laurino J.P."/>
            <person name="Lima L.F.A."/>
            <person name="Lopes M.I."/>
            <person name="Loreto E.L.S."/>
            <person name="Madeira H.M.F."/>
            <person name="Manfio G.P."/>
            <person name="Maranhao A.Q."/>
            <person name="Martinkovics C.T."/>
            <person name="Medeiros S.R.B."/>
            <person name="Moreira M.A.M."/>
            <person name="Neiva M."/>
            <person name="Ramalho-Neto C.E."/>
            <person name="Nicolas M.F."/>
            <person name="Oliveira S.C."/>
            <person name="Paixao R.F.C."/>
            <person name="Pedrosa F.O."/>
            <person name="Pena S.D.J."/>
            <person name="Pereira M."/>
            <person name="Pereira-Ferrari L."/>
            <person name="Piffer I."/>
            <person name="Pinto L.S."/>
            <person name="Potrich D.P."/>
            <person name="Salim A.C.M."/>
            <person name="Santos F.R."/>
            <person name="Schmitt R."/>
            <person name="Schneider M.P.C."/>
            <person name="Schrank A."/>
            <person name="Schrank I.S."/>
            <person name="Schuck A.F."/>
            <person name="Seuanez H.N."/>
            <person name="Silva D.W."/>
            <person name="Silva R."/>
            <person name="Silva S.C."/>
            <person name="Soares C.M.A."/>
            <person name="Souza K.R.L."/>
            <person name="Souza R.C."/>
            <person name="Staats C.C."/>
            <person name="Steffens M.B.R."/>
            <person name="Teixeira S.M.R."/>
            <person name="Urmenyi T.P."/>
            <person name="Vainstein M.H."/>
            <person name="Zuccherato L.W."/>
            <person name="Simpson A.J.G."/>
            <person name="Zaha A."/>
        </authorList>
    </citation>
    <scope>NUCLEOTIDE SEQUENCE [LARGE SCALE GENOMIC DNA]</scope>
    <source>
        <strain>J / ATCC 25934 / NCTC 10110</strain>
    </source>
</reference>
<gene>
    <name evidence="1" type="primary">asnS</name>
    <name type="ordered locus">MHJ_0414</name>
</gene>
<feature type="chain" id="PRO_1000051410" description="Asparagine--tRNA ligase">
    <location>
        <begin position="1"/>
        <end position="449"/>
    </location>
</feature>
<name>SYN_MESHJ</name>
<organism>
    <name type="scientific">Mesomycoplasma hyopneumoniae (strain J / ATCC 25934 / NCTC 10110)</name>
    <name type="common">Mycoplasma hyopneumoniae</name>
    <dbReference type="NCBI Taxonomy" id="262719"/>
    <lineage>
        <taxon>Bacteria</taxon>
        <taxon>Bacillati</taxon>
        <taxon>Mycoplasmatota</taxon>
        <taxon>Mycoplasmoidales</taxon>
        <taxon>Metamycoplasmataceae</taxon>
        <taxon>Mesomycoplasma</taxon>
    </lineage>
</organism>
<proteinExistence type="inferred from homology"/>
<comment type="catalytic activity">
    <reaction evidence="1">
        <text>tRNA(Asn) + L-asparagine + ATP = L-asparaginyl-tRNA(Asn) + AMP + diphosphate + H(+)</text>
        <dbReference type="Rhea" id="RHEA:11180"/>
        <dbReference type="Rhea" id="RHEA-COMP:9659"/>
        <dbReference type="Rhea" id="RHEA-COMP:9674"/>
        <dbReference type="ChEBI" id="CHEBI:15378"/>
        <dbReference type="ChEBI" id="CHEBI:30616"/>
        <dbReference type="ChEBI" id="CHEBI:33019"/>
        <dbReference type="ChEBI" id="CHEBI:58048"/>
        <dbReference type="ChEBI" id="CHEBI:78442"/>
        <dbReference type="ChEBI" id="CHEBI:78515"/>
        <dbReference type="ChEBI" id="CHEBI:456215"/>
        <dbReference type="EC" id="6.1.1.22"/>
    </reaction>
</comment>
<comment type="subunit">
    <text evidence="1">Homodimer.</text>
</comment>
<comment type="subcellular location">
    <subcellularLocation>
        <location evidence="1">Cytoplasm</location>
    </subcellularLocation>
</comment>
<comment type="similarity">
    <text evidence="1">Belongs to the class-II aminoacyl-tRNA synthetase family.</text>
</comment>
<accession>Q4A9S1</accession>
<evidence type="ECO:0000255" key="1">
    <source>
        <dbReference type="HAMAP-Rule" id="MF_00534"/>
    </source>
</evidence>
<sequence>MFQTINEISIHPELYNQKKVLIQGWITNIRGNLKIIFVELNDGSSFKNLQCVLKKEFIDFDKIENLALGVAVEISGIFSNTPERQQFGEVLVETLEIKGNNYNTNFPIQNQEISLEVLRQMPHFRHRSRLFRVIMKLRSALFFEIHKFFRRQGFINFSAPILTSNDGEGAGEVFIVDDENKDFFNKKTTLGVTGQLHAEAYALGFKKVYTFAPTFRAERSNTRRHAAEFWMIEPEVAFFTLEQIIELAVKLLQKVIKSVIIRNKDEFIFLEKAGDKNLRKRLLQFCDSQVTQISYEKAIELLLEHQEKFEEKDLFFGCDLKTEHERFLTEEIFHMPVVIINYPKNLKAFYMHQNEDGQTVAAFDLLVPGIGELIGGSQREVRYEKLLARMSELNMNIEEFQWYLDLRKYGNPGSSGFGLGFERLLMYITGIENIRDVIPFPRTSKNILM</sequence>
<protein>
    <recommendedName>
        <fullName evidence="1">Asparagine--tRNA ligase</fullName>
        <ecNumber evidence="1">6.1.1.22</ecNumber>
    </recommendedName>
    <alternativeName>
        <fullName evidence="1">Asparaginyl-tRNA synthetase</fullName>
        <shortName evidence="1">AsnRS</shortName>
    </alternativeName>
</protein>
<keyword id="KW-0030">Aminoacyl-tRNA synthetase</keyword>
<keyword id="KW-0067">ATP-binding</keyword>
<keyword id="KW-0963">Cytoplasm</keyword>
<keyword id="KW-0436">Ligase</keyword>
<keyword id="KW-0547">Nucleotide-binding</keyword>
<keyword id="KW-0648">Protein biosynthesis</keyword>